<gene>
    <name type="primary">pelB</name>
    <name type="ORF">An03g00190</name>
</gene>
<proteinExistence type="inferred from homology"/>
<organism>
    <name type="scientific">Aspergillus niger (strain ATCC MYA-4892 / CBS 513.88 / FGSC A1513)</name>
    <dbReference type="NCBI Taxonomy" id="425011"/>
    <lineage>
        <taxon>Eukaryota</taxon>
        <taxon>Fungi</taxon>
        <taxon>Dikarya</taxon>
        <taxon>Ascomycota</taxon>
        <taxon>Pezizomycotina</taxon>
        <taxon>Eurotiomycetes</taxon>
        <taxon>Eurotiomycetidae</taxon>
        <taxon>Eurotiales</taxon>
        <taxon>Aspergillaceae</taxon>
        <taxon>Aspergillus</taxon>
        <taxon>Aspergillus subgen. Circumdati</taxon>
    </lineage>
</organism>
<evidence type="ECO:0000250" key="1"/>
<evidence type="ECO:0000255" key="2"/>
<evidence type="ECO:0000305" key="3"/>
<name>PELB_ASPNC</name>
<sequence length="379" mass="39854">MHYKLLFAAAAASLASAVSAAGVVGAAEGFAHGVTGGGSASPVYPTTTDELVSYLGDNEPRVIILDRTFDFTGTEGTETTTGCAPWGTASQCQVAINLHSWCDNYQASAPKVSVTYDKAGILPITVNSNKSIVGQGTKGVIKGKGLRVVSGAKNVIIQNIAVTDINPKYVWGGDAITVDDSDLVWIDHVTTARIGRQHIVLGTSADNRVTISYSLIDGRSDYSATCNGHHYWGVYLDGSNDMVTLKGNYFYNLSGRMPKVQGNTLLHAVNNLFHNFDGHAFEIGTGGYVLAEGNVFQDVNTVVETPISGQLFSSPDANTNQQCASVFGRSCQLNAFGNSGSMSGSDTSIISKFAGKTIAAAHPPGNIAQWTMKNAGQGK</sequence>
<accession>A2QFN7</accession>
<comment type="function">
    <text evidence="1">Pectinolytic enzymes consist of four classes of enzymes: pectin lyase, polygalacturonase, pectin methylesterase and rhamnogalacturonase. Among pectinolytic enzymes, pectin lyase is the most important in depolymerization of pectin, since it cleaves internal glycosidic bonds of highly methylated pectins (By similarity).</text>
</comment>
<comment type="catalytic activity">
    <reaction>
        <text>Eliminative cleavage of (1-&gt;4)-alpha-D-galacturonan methyl ester to give oligosaccharides with 4-deoxy-6-O-methyl-alpha-D-galact-4-enuronosyl groups at their non-reducing ends.</text>
        <dbReference type="EC" id="4.2.2.10"/>
    </reaction>
</comment>
<comment type="subcellular location">
    <subcellularLocation>
        <location evidence="1">Secreted</location>
    </subcellularLocation>
</comment>
<comment type="similarity">
    <text evidence="3">Belongs to the polysaccharide lyase 1 family.</text>
</comment>
<feature type="signal peptide" evidence="2">
    <location>
        <begin position="1"/>
        <end position="20"/>
    </location>
</feature>
<feature type="chain" id="PRO_5000219710" description="Probable pectin lyase B">
    <location>
        <begin position="21"/>
        <end position="379"/>
    </location>
</feature>
<feature type="active site" evidence="2">
    <location>
        <position position="256"/>
    </location>
</feature>
<feature type="glycosylation site" description="N-linked (GlcNAc...) asparagine" evidence="2">
    <location>
        <position position="129"/>
    </location>
</feature>
<feature type="glycosylation site" description="N-linked (GlcNAc...) asparagine" evidence="2">
    <location>
        <position position="252"/>
    </location>
</feature>
<feature type="disulfide bond" evidence="1">
    <location>
        <begin position="83"/>
        <end position="102"/>
    </location>
</feature>
<feature type="disulfide bond" evidence="1">
    <location>
        <begin position="92"/>
        <end position="226"/>
    </location>
</feature>
<feature type="disulfide bond" evidence="1">
    <location>
        <begin position="323"/>
        <end position="331"/>
    </location>
</feature>
<keyword id="KW-0119">Carbohydrate metabolism</keyword>
<keyword id="KW-0961">Cell wall biogenesis/degradation</keyword>
<keyword id="KW-1015">Disulfide bond</keyword>
<keyword id="KW-0325">Glycoprotein</keyword>
<keyword id="KW-0456">Lyase</keyword>
<keyword id="KW-0624">Polysaccharide degradation</keyword>
<keyword id="KW-1185">Reference proteome</keyword>
<keyword id="KW-0964">Secreted</keyword>
<keyword id="KW-0732">Signal</keyword>
<protein>
    <recommendedName>
        <fullName>Probable pectin lyase B</fullName>
        <shortName>PLB</shortName>
        <ecNumber>4.2.2.10</ecNumber>
    </recommendedName>
</protein>
<reference key="1">
    <citation type="journal article" date="2007" name="Nat. Biotechnol.">
        <title>Genome sequencing and analysis of the versatile cell factory Aspergillus niger CBS 513.88.</title>
        <authorList>
            <person name="Pel H.J."/>
            <person name="de Winde J.H."/>
            <person name="Archer D.B."/>
            <person name="Dyer P.S."/>
            <person name="Hofmann G."/>
            <person name="Schaap P.J."/>
            <person name="Turner G."/>
            <person name="de Vries R.P."/>
            <person name="Albang R."/>
            <person name="Albermann K."/>
            <person name="Andersen M.R."/>
            <person name="Bendtsen J.D."/>
            <person name="Benen J.A.E."/>
            <person name="van den Berg M."/>
            <person name="Breestraat S."/>
            <person name="Caddick M.X."/>
            <person name="Contreras R."/>
            <person name="Cornell M."/>
            <person name="Coutinho P.M."/>
            <person name="Danchin E.G.J."/>
            <person name="Debets A.J.M."/>
            <person name="Dekker P."/>
            <person name="van Dijck P.W.M."/>
            <person name="van Dijk A."/>
            <person name="Dijkhuizen L."/>
            <person name="Driessen A.J.M."/>
            <person name="d'Enfert C."/>
            <person name="Geysens S."/>
            <person name="Goosen C."/>
            <person name="Groot G.S.P."/>
            <person name="de Groot P.W.J."/>
            <person name="Guillemette T."/>
            <person name="Henrissat B."/>
            <person name="Herweijer M."/>
            <person name="van den Hombergh J.P.T.W."/>
            <person name="van den Hondel C.A.M.J.J."/>
            <person name="van der Heijden R.T.J.M."/>
            <person name="van der Kaaij R.M."/>
            <person name="Klis F.M."/>
            <person name="Kools H.J."/>
            <person name="Kubicek C.P."/>
            <person name="van Kuyk P.A."/>
            <person name="Lauber J."/>
            <person name="Lu X."/>
            <person name="van der Maarel M.J.E.C."/>
            <person name="Meulenberg R."/>
            <person name="Menke H."/>
            <person name="Mortimer M.A."/>
            <person name="Nielsen J."/>
            <person name="Oliver S.G."/>
            <person name="Olsthoorn M."/>
            <person name="Pal K."/>
            <person name="van Peij N.N.M.E."/>
            <person name="Ram A.F.J."/>
            <person name="Rinas U."/>
            <person name="Roubos J.A."/>
            <person name="Sagt C.M.J."/>
            <person name="Schmoll M."/>
            <person name="Sun J."/>
            <person name="Ussery D."/>
            <person name="Varga J."/>
            <person name="Vervecken W."/>
            <person name="van de Vondervoort P.J.J."/>
            <person name="Wedler H."/>
            <person name="Woesten H.A.B."/>
            <person name="Zeng A.-P."/>
            <person name="van Ooyen A.J.J."/>
            <person name="Visser J."/>
            <person name="Stam H."/>
        </authorList>
    </citation>
    <scope>NUCLEOTIDE SEQUENCE [LARGE SCALE GENOMIC DNA]</scope>
    <source>
        <strain>ATCC MYA-4892 / CBS 513.88 / FGSC A1513</strain>
    </source>
</reference>
<dbReference type="EC" id="4.2.2.10"/>
<dbReference type="EMBL" id="AM270043">
    <property type="protein sequence ID" value="CAK37997.1"/>
    <property type="molecule type" value="Genomic_DNA"/>
</dbReference>
<dbReference type="RefSeq" id="XP_001389926.1">
    <property type="nucleotide sequence ID" value="XM_001389889.1"/>
</dbReference>
<dbReference type="SMR" id="A2QFN7"/>
<dbReference type="CAZy" id="PL1">
    <property type="family name" value="Polysaccharide Lyase Family 1"/>
</dbReference>
<dbReference type="GlyCosmos" id="A2QFN7">
    <property type="glycosylation" value="2 sites, No reported glycans"/>
</dbReference>
<dbReference type="EnsemblFungi" id="CAK37997">
    <property type="protein sequence ID" value="CAK37997"/>
    <property type="gene ID" value="An03g00190"/>
</dbReference>
<dbReference type="GeneID" id="4980695"/>
<dbReference type="KEGG" id="ang:An03g00190"/>
<dbReference type="VEuPathDB" id="FungiDB:An03g00190"/>
<dbReference type="HOGENOM" id="CLU_021980_0_1_1"/>
<dbReference type="Proteomes" id="UP000006706">
    <property type="component" value="Chromosome 6R"/>
</dbReference>
<dbReference type="GO" id="GO:0005576">
    <property type="term" value="C:extracellular region"/>
    <property type="evidence" value="ECO:0007669"/>
    <property type="project" value="UniProtKB-SubCell"/>
</dbReference>
<dbReference type="GO" id="GO:0030570">
    <property type="term" value="F:pectate lyase activity"/>
    <property type="evidence" value="ECO:0007669"/>
    <property type="project" value="InterPro"/>
</dbReference>
<dbReference type="GO" id="GO:0047490">
    <property type="term" value="F:pectin lyase activity"/>
    <property type="evidence" value="ECO:0000250"/>
    <property type="project" value="UniProtKB"/>
</dbReference>
<dbReference type="GO" id="GO:0071555">
    <property type="term" value="P:cell wall organization"/>
    <property type="evidence" value="ECO:0007669"/>
    <property type="project" value="UniProtKB-KW"/>
</dbReference>
<dbReference type="GO" id="GO:0045490">
    <property type="term" value="P:pectin catabolic process"/>
    <property type="evidence" value="ECO:0000250"/>
    <property type="project" value="UniProtKB"/>
</dbReference>
<dbReference type="FunFam" id="2.160.20.10:FF:000003">
    <property type="entry name" value="Pectin lyase F"/>
    <property type="match status" value="1"/>
</dbReference>
<dbReference type="Gene3D" id="2.160.20.10">
    <property type="entry name" value="Single-stranded right-handed beta-helix, Pectin lyase-like"/>
    <property type="match status" value="1"/>
</dbReference>
<dbReference type="InterPro" id="IPR002022">
    <property type="entry name" value="Pec_lyase"/>
</dbReference>
<dbReference type="InterPro" id="IPR012334">
    <property type="entry name" value="Pectin_lyas_fold"/>
</dbReference>
<dbReference type="InterPro" id="IPR011050">
    <property type="entry name" value="Pectin_lyase_fold/virulence"/>
</dbReference>
<dbReference type="InterPro" id="IPR045032">
    <property type="entry name" value="PEL"/>
</dbReference>
<dbReference type="PANTHER" id="PTHR31683">
    <property type="entry name" value="PECTATE LYASE 18-RELATED"/>
    <property type="match status" value="1"/>
</dbReference>
<dbReference type="PANTHER" id="PTHR31683:SF16">
    <property type="entry name" value="PECTIN LYASE A-RELATED"/>
    <property type="match status" value="1"/>
</dbReference>
<dbReference type="Pfam" id="PF00544">
    <property type="entry name" value="Pectate_lyase_4"/>
    <property type="match status" value="1"/>
</dbReference>
<dbReference type="SMART" id="SM00656">
    <property type="entry name" value="Amb_all"/>
    <property type="match status" value="1"/>
</dbReference>
<dbReference type="SUPFAM" id="SSF51126">
    <property type="entry name" value="Pectin lyase-like"/>
    <property type="match status" value="1"/>
</dbReference>